<proteinExistence type="inferred from homology"/>
<dbReference type="EMBL" id="AADN04000321">
    <property type="status" value="NOT_ANNOTATED_CDS"/>
    <property type="molecule type" value="Genomic_DNA"/>
</dbReference>
<dbReference type="FunCoup" id="F1NXU8">
    <property type="interactions" value="177"/>
</dbReference>
<dbReference type="GlyCosmos" id="F1NXU8">
    <property type="glycosylation" value="1 site, No reported glycans"/>
</dbReference>
<dbReference type="GlyGen" id="F1NXU8">
    <property type="glycosylation" value="1 site"/>
</dbReference>
<dbReference type="PaxDb" id="9031-ENSGALP00000013555"/>
<dbReference type="VEuPathDB" id="HostDB:geneid_417032"/>
<dbReference type="eggNOG" id="KOG2399">
    <property type="taxonomic scope" value="Eukaryota"/>
</dbReference>
<dbReference type="HOGENOM" id="CLU_004979_3_2_1"/>
<dbReference type="InParanoid" id="F1NXU8"/>
<dbReference type="OrthoDB" id="407410at2759"/>
<dbReference type="TreeFam" id="TF323444"/>
<dbReference type="Proteomes" id="UP000000539">
    <property type="component" value="Unassembled WGS sequence"/>
</dbReference>
<dbReference type="GO" id="GO:0016020">
    <property type="term" value="C:membrane"/>
    <property type="evidence" value="ECO:0000318"/>
    <property type="project" value="GO_Central"/>
</dbReference>
<dbReference type="GO" id="GO:0005743">
    <property type="term" value="C:mitochondrial inner membrane"/>
    <property type="evidence" value="ECO:0007669"/>
    <property type="project" value="UniProtKB-SubCell"/>
</dbReference>
<dbReference type="GO" id="GO:0005739">
    <property type="term" value="C:mitochondrion"/>
    <property type="evidence" value="ECO:0000250"/>
    <property type="project" value="UniProtKB"/>
</dbReference>
<dbReference type="GO" id="GO:0005432">
    <property type="term" value="F:calcium:sodium antiporter activity"/>
    <property type="evidence" value="ECO:0000250"/>
    <property type="project" value="UniProtKB"/>
</dbReference>
<dbReference type="GO" id="GO:0086038">
    <property type="term" value="F:calcium:sodium antiporter activity involved in regulation of cardiac muscle cell membrane potential"/>
    <property type="evidence" value="ECO:0000250"/>
    <property type="project" value="UniProtKB"/>
</dbReference>
<dbReference type="GO" id="GO:0099093">
    <property type="term" value="P:calcium export from the mitochondrion"/>
    <property type="evidence" value="ECO:0000250"/>
    <property type="project" value="UniProtKB"/>
</dbReference>
<dbReference type="GO" id="GO:0006874">
    <property type="term" value="P:intracellular calcium ion homeostasis"/>
    <property type="evidence" value="ECO:0000318"/>
    <property type="project" value="GO_Central"/>
</dbReference>
<dbReference type="GO" id="GO:0051560">
    <property type="term" value="P:mitochondrial calcium ion homeostasis"/>
    <property type="evidence" value="ECO:0000250"/>
    <property type="project" value="UniProtKB"/>
</dbReference>
<dbReference type="GO" id="GO:0006851">
    <property type="term" value="P:mitochondrial calcium ion transmembrane transport"/>
    <property type="evidence" value="ECO:0000250"/>
    <property type="project" value="UniProtKB"/>
</dbReference>
<dbReference type="GO" id="GO:1901623">
    <property type="term" value="P:regulation of lymphocyte chemotaxis"/>
    <property type="evidence" value="ECO:0000315"/>
    <property type="project" value="UniProtKB"/>
</dbReference>
<dbReference type="GO" id="GO:2001256">
    <property type="term" value="P:regulation of store-operated calcium entry"/>
    <property type="evidence" value="ECO:0000250"/>
    <property type="project" value="UniProtKB"/>
</dbReference>
<dbReference type="FunFam" id="1.20.1420.30:FF:000023">
    <property type="entry name" value="Mitochondrial sodium/calcium exchanger protein"/>
    <property type="match status" value="1"/>
</dbReference>
<dbReference type="FunFam" id="1.20.1420.30:FF:000025">
    <property type="entry name" value="sodium/potassium/calcium exchanger 6, mitochondrial isoform X3"/>
    <property type="match status" value="1"/>
</dbReference>
<dbReference type="Gene3D" id="1.20.1420.30">
    <property type="entry name" value="NCX, central ion-binding region"/>
    <property type="match status" value="2"/>
</dbReference>
<dbReference type="InterPro" id="IPR051359">
    <property type="entry name" value="CaCA_antiporter"/>
</dbReference>
<dbReference type="InterPro" id="IPR004837">
    <property type="entry name" value="NaCa_Exmemb"/>
</dbReference>
<dbReference type="InterPro" id="IPR044880">
    <property type="entry name" value="NCX_ion-bd_dom_sf"/>
</dbReference>
<dbReference type="PANTHER" id="PTHR12266:SF0">
    <property type="entry name" value="MITOCHONDRIAL SODIUM_CALCIUM EXCHANGER PROTEIN"/>
    <property type="match status" value="1"/>
</dbReference>
<dbReference type="PANTHER" id="PTHR12266">
    <property type="entry name" value="NA+/CA2+ K+ INDEPENDENT EXCHANGER"/>
    <property type="match status" value="1"/>
</dbReference>
<dbReference type="Pfam" id="PF01699">
    <property type="entry name" value="Na_Ca_ex"/>
    <property type="match status" value="2"/>
</dbReference>
<evidence type="ECO:0000250" key="1">
    <source>
        <dbReference type="UniProtKB" id="Q6J4K2"/>
    </source>
</evidence>
<evidence type="ECO:0000250" key="2">
    <source>
        <dbReference type="UniProtKB" id="Q925Q3"/>
    </source>
</evidence>
<evidence type="ECO:0000255" key="3"/>
<evidence type="ECO:0000255" key="4">
    <source>
        <dbReference type="PROSITE-ProRule" id="PRU00498"/>
    </source>
</evidence>
<evidence type="ECO:0000256" key="5">
    <source>
        <dbReference type="SAM" id="MobiDB-lite"/>
    </source>
</evidence>
<evidence type="ECO:0000269" key="6">
    <source>
    </source>
</evidence>
<evidence type="ECO:0000305" key="7"/>
<protein>
    <recommendedName>
        <fullName evidence="7">Mitochondrial sodium/calcium exchanger protein</fullName>
    </recommendedName>
    <alternativeName>
        <fullName evidence="2">Na(+)/K(+)/Ca(2+)-exchange protein 6</fullName>
    </alternativeName>
    <alternativeName>
        <fullName evidence="2">Sodium/calcium exchanger protein, mitochondrial</fullName>
    </alternativeName>
    <alternativeName>
        <fullName evidence="2">Sodium/potassium/calcium exchanger 6</fullName>
    </alternativeName>
    <alternativeName>
        <fullName evidence="1">Solute carrier family 8 member B1</fullName>
    </alternativeName>
</protein>
<accession>F1NXU8</accession>
<name>NCLX_CHICK</name>
<gene>
    <name evidence="1" type="primary">SLC8B1</name>
    <name evidence="2" type="synonym">NCKX6</name>
    <name evidence="2" type="synonym">NCLX</name>
</gene>
<reference key="1">
    <citation type="journal article" date="2004" name="Nature">
        <title>Sequence and comparative analysis of the chicken genome provide unique perspectives on vertebrate evolution.</title>
        <authorList>
            <person name="Hillier L.W."/>
            <person name="Miller W."/>
            <person name="Birney E."/>
            <person name="Warren W."/>
            <person name="Hardison R.C."/>
            <person name="Ponting C.P."/>
            <person name="Bork P."/>
            <person name="Burt D.W."/>
            <person name="Groenen M.A.M."/>
            <person name="Delany M.E."/>
            <person name="Dodgson J.B."/>
            <person name="Chinwalla A.T."/>
            <person name="Cliften P.F."/>
            <person name="Clifton S.W."/>
            <person name="Delehaunty K.D."/>
            <person name="Fronick C."/>
            <person name="Fulton R.S."/>
            <person name="Graves T.A."/>
            <person name="Kremitzki C."/>
            <person name="Layman D."/>
            <person name="Magrini V."/>
            <person name="McPherson J.D."/>
            <person name="Miner T.L."/>
            <person name="Minx P."/>
            <person name="Nash W.E."/>
            <person name="Nhan M.N."/>
            <person name="Nelson J.O."/>
            <person name="Oddy L.G."/>
            <person name="Pohl C.S."/>
            <person name="Randall-Maher J."/>
            <person name="Smith S.M."/>
            <person name="Wallis J.W."/>
            <person name="Yang S.-P."/>
            <person name="Romanov M.N."/>
            <person name="Rondelli C.M."/>
            <person name="Paton B."/>
            <person name="Smith J."/>
            <person name="Morrice D."/>
            <person name="Daniels L."/>
            <person name="Tempest H.G."/>
            <person name="Robertson L."/>
            <person name="Masabanda J.S."/>
            <person name="Griffin D.K."/>
            <person name="Vignal A."/>
            <person name="Fillon V."/>
            <person name="Jacobbson L."/>
            <person name="Kerje S."/>
            <person name="Andersson L."/>
            <person name="Crooijmans R.P."/>
            <person name="Aerts J."/>
            <person name="van der Poel J.J."/>
            <person name="Ellegren H."/>
            <person name="Caldwell R.B."/>
            <person name="Hubbard S.J."/>
            <person name="Grafham D.V."/>
            <person name="Kierzek A.M."/>
            <person name="McLaren S.R."/>
            <person name="Overton I.M."/>
            <person name="Arakawa H."/>
            <person name="Beattie K.J."/>
            <person name="Bezzubov Y."/>
            <person name="Boardman P.E."/>
            <person name="Bonfield J.K."/>
            <person name="Croning M.D.R."/>
            <person name="Davies R.M."/>
            <person name="Francis M.D."/>
            <person name="Humphray S.J."/>
            <person name="Scott C.E."/>
            <person name="Taylor R.G."/>
            <person name="Tickle C."/>
            <person name="Brown W.R.A."/>
            <person name="Rogers J."/>
            <person name="Buerstedde J.-M."/>
            <person name="Wilson S.A."/>
            <person name="Stubbs L."/>
            <person name="Ovcharenko I."/>
            <person name="Gordon L."/>
            <person name="Lucas S."/>
            <person name="Miller M.M."/>
            <person name="Inoko H."/>
            <person name="Shiina T."/>
            <person name="Kaufman J."/>
            <person name="Salomonsen J."/>
            <person name="Skjoedt K."/>
            <person name="Wong G.K.-S."/>
            <person name="Wang J."/>
            <person name="Liu B."/>
            <person name="Wang J."/>
            <person name="Yu J."/>
            <person name="Yang H."/>
            <person name="Nefedov M."/>
            <person name="Koriabine M."/>
            <person name="Dejong P.J."/>
            <person name="Goodstadt L."/>
            <person name="Webber C."/>
            <person name="Dickens N.J."/>
            <person name="Letunic I."/>
            <person name="Suyama M."/>
            <person name="Torrents D."/>
            <person name="von Mering C."/>
            <person name="Zdobnov E.M."/>
            <person name="Makova K."/>
            <person name="Nekrutenko A."/>
            <person name="Elnitski L."/>
            <person name="Eswara P."/>
            <person name="King D.C."/>
            <person name="Yang S.-P."/>
            <person name="Tyekucheva S."/>
            <person name="Radakrishnan A."/>
            <person name="Harris R.S."/>
            <person name="Chiaromonte F."/>
            <person name="Taylor J."/>
            <person name="He J."/>
            <person name="Rijnkels M."/>
            <person name="Griffiths-Jones S."/>
            <person name="Ureta-Vidal A."/>
            <person name="Hoffman M.M."/>
            <person name="Severin J."/>
            <person name="Searle S.M.J."/>
            <person name="Law A.S."/>
            <person name="Speed D."/>
            <person name="Waddington D."/>
            <person name="Cheng Z."/>
            <person name="Tuzun E."/>
            <person name="Eichler E."/>
            <person name="Bao Z."/>
            <person name="Flicek P."/>
            <person name="Shteynberg D.D."/>
            <person name="Brent M.R."/>
            <person name="Bye J.M."/>
            <person name="Huckle E.J."/>
            <person name="Chatterji S."/>
            <person name="Dewey C."/>
            <person name="Pachter L."/>
            <person name="Kouranov A."/>
            <person name="Mourelatos Z."/>
            <person name="Hatzigeorgiou A.G."/>
            <person name="Paterson A.H."/>
            <person name="Ivarie R."/>
            <person name="Brandstrom M."/>
            <person name="Axelsson E."/>
            <person name="Backstrom N."/>
            <person name="Berlin S."/>
            <person name="Webster M.T."/>
            <person name="Pourquie O."/>
            <person name="Reymond A."/>
            <person name="Ucla C."/>
            <person name="Antonarakis S.E."/>
            <person name="Long M."/>
            <person name="Emerson J.J."/>
            <person name="Betran E."/>
            <person name="Dupanloup I."/>
            <person name="Kaessmann H."/>
            <person name="Hinrichs A.S."/>
            <person name="Bejerano G."/>
            <person name="Furey T.S."/>
            <person name="Harte R.A."/>
            <person name="Raney B."/>
            <person name="Siepel A."/>
            <person name="Kent W.J."/>
            <person name="Haussler D."/>
            <person name="Eyras E."/>
            <person name="Castelo R."/>
            <person name="Abril J.F."/>
            <person name="Castellano S."/>
            <person name="Camara F."/>
            <person name="Parra G."/>
            <person name="Guigo R."/>
            <person name="Bourque G."/>
            <person name="Tesler G."/>
            <person name="Pevzner P.A."/>
            <person name="Smit A."/>
            <person name="Fulton L.A."/>
            <person name="Mardis E.R."/>
            <person name="Wilson R.K."/>
        </authorList>
    </citation>
    <scope>NUCLEOTIDE SEQUENCE [LARGE SCALE GENOMIC DNA]</scope>
    <source>
        <strain>Red jungle fowl</strain>
    </source>
</reference>
<reference key="2">
    <citation type="journal article" date="2016" name="Sci. Rep.">
        <title>Roles of the mitochondrial Na(+)-Ca(2+) exchanger, NCLX, in B lymphocyte chemotaxis.</title>
        <authorList>
            <person name="Kim B."/>
            <person name="Takeuchi A."/>
            <person name="Hikida M."/>
            <person name="Matsuoka S."/>
        </authorList>
    </citation>
    <scope>FUNCTION</scope>
</reference>
<keyword id="KW-0050">Antiport</keyword>
<keyword id="KW-0106">Calcium</keyword>
<keyword id="KW-0109">Calcium transport</keyword>
<keyword id="KW-0325">Glycoprotein</keyword>
<keyword id="KW-0406">Ion transport</keyword>
<keyword id="KW-0452">Lithium</keyword>
<keyword id="KW-0472">Membrane</keyword>
<keyword id="KW-0496">Mitochondrion</keyword>
<keyword id="KW-0999">Mitochondrion inner membrane</keyword>
<keyword id="KW-1185">Reference proteome</keyword>
<keyword id="KW-0716">Sensory transduction</keyword>
<keyword id="KW-0732">Signal</keyword>
<keyword id="KW-0915">Sodium</keyword>
<keyword id="KW-0739">Sodium transport</keyword>
<keyword id="KW-0812">Transmembrane</keyword>
<keyword id="KW-1133">Transmembrane helix</keyword>
<keyword id="KW-0813">Transport</keyword>
<comment type="function">
    <text evidence="1 2 6">Mitochondrial sodium/calcium antiporter that mediates sodium-dependent calcium efflux from mitochondrion, by mediating the exchange of 3 sodium ions per 1 calcium ion (By similarity). Plays a central role in mitochondrial calcium homeostasis by mediating mitochondrial calcium extrusion: calcium efflux is essential for mitochondrial function and cell survival, notably in cardiomyocytes (By similarity). Involved in B-lymphocyte chemotaxis (PubMed:27328625).</text>
</comment>
<comment type="catalytic activity">
    <reaction evidence="1">
        <text>Ca(2+)(in) + 3 Na(+)(out) = Ca(2+)(out) + 3 Na(+)(in)</text>
        <dbReference type="Rhea" id="RHEA:69955"/>
        <dbReference type="ChEBI" id="CHEBI:29101"/>
        <dbReference type="ChEBI" id="CHEBI:29108"/>
    </reaction>
</comment>
<comment type="subcellular location">
    <subcellularLocation>
        <location evidence="1">Mitochondrion inner membrane</location>
        <topology evidence="1">Multi-pass membrane protein</topology>
    </subcellularLocation>
</comment>
<comment type="similarity">
    <text evidence="7">Belongs to the Ca(2+):cation antiporter (CaCA) (TC 2.A.19) family. SLC24A subfamily.</text>
</comment>
<feature type="signal peptide" evidence="3">
    <location>
        <begin position="1"/>
        <end position="20"/>
    </location>
</feature>
<feature type="chain" id="PRO_0000440954" description="Mitochondrial sodium/calcium exchanger protein">
    <location>
        <begin position="21"/>
        <end position="593"/>
    </location>
</feature>
<feature type="topological domain" description="Extracellular" evidence="7">
    <location>
        <begin position="21"/>
        <end position="93"/>
    </location>
</feature>
<feature type="transmembrane region" description="Helical" evidence="3">
    <location>
        <begin position="94"/>
        <end position="114"/>
    </location>
</feature>
<feature type="topological domain" description="Cytoplasmic" evidence="7">
    <location>
        <begin position="115"/>
        <end position="135"/>
    </location>
</feature>
<feature type="transmembrane region" description="Helical" evidence="3">
    <location>
        <begin position="136"/>
        <end position="158"/>
    </location>
</feature>
<feature type="topological domain" description="Extracellular" evidence="7">
    <location>
        <begin position="159"/>
        <end position="178"/>
    </location>
</feature>
<feature type="transmembrane region" description="Helical" evidence="3">
    <location>
        <begin position="179"/>
        <end position="199"/>
    </location>
</feature>
<feature type="topological domain" description="Cytoplasmic" evidence="7">
    <location>
        <begin position="200"/>
        <end position="215"/>
    </location>
</feature>
<feature type="transmembrane region" description="Helical" evidence="3">
    <location>
        <begin position="216"/>
        <end position="236"/>
    </location>
</feature>
<feature type="topological domain" description="Extracellular" evidence="7">
    <location>
        <begin position="237"/>
        <end position="239"/>
    </location>
</feature>
<feature type="transmembrane region" description="Helical" evidence="3">
    <location>
        <begin position="240"/>
        <end position="260"/>
    </location>
</feature>
<feature type="topological domain" description="Cytoplasmic" evidence="7">
    <location>
        <begin position="261"/>
        <end position="334"/>
    </location>
</feature>
<feature type="transmembrane region" description="Helical" evidence="3">
    <location>
        <begin position="335"/>
        <end position="355"/>
    </location>
</feature>
<feature type="topological domain" description="Extracellular" evidence="7">
    <location>
        <begin position="356"/>
        <end position="369"/>
    </location>
</feature>
<feature type="transmembrane region" description="Helical" evidence="3">
    <location>
        <begin position="370"/>
        <end position="390"/>
    </location>
</feature>
<feature type="topological domain" description="Cytoplasmic" evidence="7">
    <location>
        <begin position="391"/>
        <end position="395"/>
    </location>
</feature>
<feature type="transmembrane region" description="Helical" evidence="3">
    <location>
        <begin position="396"/>
        <end position="416"/>
    </location>
</feature>
<feature type="topological domain" description="Extracellular" evidence="7">
    <location>
        <begin position="417"/>
        <end position="428"/>
    </location>
</feature>
<feature type="transmembrane region" description="Helical" evidence="3">
    <location>
        <begin position="429"/>
        <end position="449"/>
    </location>
</feature>
<feature type="topological domain" description="Cytoplasmic" evidence="7">
    <location>
        <begin position="450"/>
        <end position="454"/>
    </location>
</feature>
<feature type="transmembrane region" description="Helical" evidence="3">
    <location>
        <begin position="455"/>
        <end position="475"/>
    </location>
</feature>
<feature type="topological domain" description="Extracellular" evidence="7">
    <location>
        <begin position="476"/>
        <end position="496"/>
    </location>
</feature>
<feature type="transmembrane region" description="Helical" evidence="3">
    <location>
        <begin position="497"/>
        <end position="517"/>
    </location>
</feature>
<feature type="topological domain" description="Cytoplasmic" evidence="7">
    <location>
        <begin position="518"/>
        <end position="533"/>
    </location>
</feature>
<feature type="transmembrane region" description="Helical" evidence="3">
    <location>
        <begin position="534"/>
        <end position="554"/>
    </location>
</feature>
<feature type="topological domain" description="Extracellular" evidence="7">
    <location>
        <begin position="555"/>
        <end position="564"/>
    </location>
</feature>
<feature type="transmembrane region" description="Helical" evidence="3">
    <location>
        <begin position="565"/>
        <end position="585"/>
    </location>
</feature>
<feature type="topological domain" description="Cytoplasmic" evidence="7">
    <location>
        <begin position="586"/>
        <end position="593"/>
    </location>
</feature>
<feature type="region of interest" description="Disordered" evidence="5">
    <location>
        <begin position="268"/>
        <end position="291"/>
    </location>
</feature>
<feature type="compositionally biased region" description="Pro residues" evidence="5">
    <location>
        <begin position="268"/>
        <end position="277"/>
    </location>
</feature>
<feature type="glycosylation site" description="N-linked (GlcNAc...) asparagine" evidence="4">
    <location>
        <position position="58"/>
    </location>
</feature>
<organism>
    <name type="scientific">Gallus gallus</name>
    <name type="common">Chicken</name>
    <dbReference type="NCBI Taxonomy" id="9031"/>
    <lineage>
        <taxon>Eukaryota</taxon>
        <taxon>Metazoa</taxon>
        <taxon>Chordata</taxon>
        <taxon>Craniata</taxon>
        <taxon>Vertebrata</taxon>
        <taxon>Euteleostomi</taxon>
        <taxon>Archelosauria</taxon>
        <taxon>Archosauria</taxon>
        <taxon>Dinosauria</taxon>
        <taxon>Saurischia</taxon>
        <taxon>Theropoda</taxon>
        <taxon>Coelurosauria</taxon>
        <taxon>Aves</taxon>
        <taxon>Neognathae</taxon>
        <taxon>Galloanserae</taxon>
        <taxon>Galliformes</taxon>
        <taxon>Phasianidae</taxon>
        <taxon>Phasianinae</taxon>
        <taxon>Gallus</taxon>
    </lineage>
</organism>
<sequence length="593" mass="64331">MGPLWALRVAGALSVAGVLAGHDGSQRAGQPAALDAGTRGDGVGHDRGVDCREVRKRNSSERCRFVRGTPDCRLDGGFLDYLGGAFCTFPSSLLPLSVSLYALWLLYLFVILGVTAEKFFCPNLSAISTNLKLSHNGLGVVGHSLTPALHGVTFLAFGNGAPDIFSAVVAFSDPRTAGLAVGAIFGAGIFVTTVVAGGIALVKPFAAASRPFLRDVIFYMVAVFLTFLVLYFGYITLGEALGYLGLYVFYVFTVVLCTWIHRWQRGDGPPPPGPWEPAIPTDAEEQESSGTNCGDYGEEYRPLLPYHETSLHILSTALSPLDKHKWRRKPWYWRLFKVLKVPVELVLLLTVPVVDPDKDDLNWKRPLNCLHIVTGPLLCIFTLKSGAYGLYQIQGVFPVWALVALAGSVLAIIVFVTTHNEEPPKYHCVFAFLGFLSSAMWINAAATELVNILRTLGIIFELSNTVLGLTLLAWGNSIGDTFSDLTMARQGYPRMAFSACFGGIIFNILVGVGLGCLLQMTNSQMVVKLEPDSLLVWILAGALGLSLVFSFVAVPAQCFQLGKAYGTCLILYYLVFLCVALLTEFRVIHLAAT</sequence>